<keyword id="KW-0521">NADP</keyword>
<keyword id="KW-0560">Oxidoreductase</keyword>
<keyword id="KW-0627">Porphyrin biosynthesis</keyword>
<sequence length="414" mass="45982">MQLVVVGAHQRTAPISIRERIAFAEAELAQALSSLRQIAVEGFILSTCNRVELYALVEEADGGRSLRQFLAQQRSIDLDELMPHVYTYLDEDAVRHLFRVASGLDSMALGEAQILSQIKTAYNAAQQTELLGTTMHRLIQAALTTGKLVRTETQLAHAQLSVVSVGLSLARQHLDLTNRSVVIIGAGRTGELALKHYLEYTSNITVLSRTFERAARLAEHHKVAAKPISELAAVLQASDVVISCTSSPELMLDFEQAQLLQAQRQRQWVLLDLAVPRDIDRHVGALPEVWLYDVDDMQAICERNRASKAAEVAGAEAIVERELIKWQEWWLTQAVLPTIRALRAHAEAIRLAELERTLARLDLSEQQQQAVSALTSAIINKLLHQPMRAIKDTAASPQLAHAAQQLFRLDFEAI</sequence>
<dbReference type="EC" id="1.2.1.70" evidence="1"/>
<dbReference type="EMBL" id="CP000875">
    <property type="protein sequence ID" value="ABX06180.1"/>
    <property type="molecule type" value="Genomic_DNA"/>
</dbReference>
<dbReference type="SMR" id="A9B543"/>
<dbReference type="FunCoup" id="A9B543">
    <property type="interactions" value="385"/>
</dbReference>
<dbReference type="STRING" id="316274.Haur_3544"/>
<dbReference type="KEGG" id="hau:Haur_3544"/>
<dbReference type="eggNOG" id="COG0373">
    <property type="taxonomic scope" value="Bacteria"/>
</dbReference>
<dbReference type="HOGENOM" id="CLU_035113_2_2_0"/>
<dbReference type="InParanoid" id="A9B543"/>
<dbReference type="UniPathway" id="UPA00251">
    <property type="reaction ID" value="UER00316"/>
</dbReference>
<dbReference type="Proteomes" id="UP000000787">
    <property type="component" value="Chromosome"/>
</dbReference>
<dbReference type="GO" id="GO:0008883">
    <property type="term" value="F:glutamyl-tRNA reductase activity"/>
    <property type="evidence" value="ECO:0007669"/>
    <property type="project" value="UniProtKB-UniRule"/>
</dbReference>
<dbReference type="GO" id="GO:0050661">
    <property type="term" value="F:NADP binding"/>
    <property type="evidence" value="ECO:0007669"/>
    <property type="project" value="InterPro"/>
</dbReference>
<dbReference type="GO" id="GO:0019353">
    <property type="term" value="P:protoporphyrinogen IX biosynthetic process from glutamate"/>
    <property type="evidence" value="ECO:0007669"/>
    <property type="project" value="TreeGrafter"/>
</dbReference>
<dbReference type="CDD" id="cd05213">
    <property type="entry name" value="NAD_bind_Glutamyl_tRNA_reduct"/>
    <property type="match status" value="1"/>
</dbReference>
<dbReference type="FunFam" id="3.30.460.30:FF:000001">
    <property type="entry name" value="Glutamyl-tRNA reductase"/>
    <property type="match status" value="1"/>
</dbReference>
<dbReference type="Gene3D" id="3.30.460.30">
    <property type="entry name" value="Glutamyl-tRNA reductase, N-terminal domain"/>
    <property type="match status" value="1"/>
</dbReference>
<dbReference type="Gene3D" id="3.40.50.720">
    <property type="entry name" value="NAD(P)-binding Rossmann-like Domain"/>
    <property type="match status" value="1"/>
</dbReference>
<dbReference type="HAMAP" id="MF_00087">
    <property type="entry name" value="Glu_tRNA_reductase"/>
    <property type="match status" value="1"/>
</dbReference>
<dbReference type="InterPro" id="IPR000343">
    <property type="entry name" value="4pyrrol_synth_GluRdtase"/>
</dbReference>
<dbReference type="InterPro" id="IPR015896">
    <property type="entry name" value="4pyrrol_synth_GluRdtase_dimer"/>
</dbReference>
<dbReference type="InterPro" id="IPR015895">
    <property type="entry name" value="4pyrrol_synth_GluRdtase_N"/>
</dbReference>
<dbReference type="InterPro" id="IPR018214">
    <property type="entry name" value="GluRdtase_CS"/>
</dbReference>
<dbReference type="InterPro" id="IPR036453">
    <property type="entry name" value="GluRdtase_dimer_dom_sf"/>
</dbReference>
<dbReference type="InterPro" id="IPR036343">
    <property type="entry name" value="GluRdtase_N_sf"/>
</dbReference>
<dbReference type="InterPro" id="IPR036291">
    <property type="entry name" value="NAD(P)-bd_dom_sf"/>
</dbReference>
<dbReference type="InterPro" id="IPR006151">
    <property type="entry name" value="Shikm_DH/Glu-tRNA_Rdtase"/>
</dbReference>
<dbReference type="NCBIfam" id="TIGR01035">
    <property type="entry name" value="hemA"/>
    <property type="match status" value="1"/>
</dbReference>
<dbReference type="PANTHER" id="PTHR43013">
    <property type="entry name" value="GLUTAMYL-TRNA REDUCTASE"/>
    <property type="match status" value="1"/>
</dbReference>
<dbReference type="PANTHER" id="PTHR43013:SF1">
    <property type="entry name" value="GLUTAMYL-TRNA REDUCTASE"/>
    <property type="match status" value="1"/>
</dbReference>
<dbReference type="Pfam" id="PF00745">
    <property type="entry name" value="GlutR_dimer"/>
    <property type="match status" value="1"/>
</dbReference>
<dbReference type="Pfam" id="PF05201">
    <property type="entry name" value="GlutR_N"/>
    <property type="match status" value="1"/>
</dbReference>
<dbReference type="Pfam" id="PF01488">
    <property type="entry name" value="Shikimate_DH"/>
    <property type="match status" value="1"/>
</dbReference>
<dbReference type="PIRSF" id="PIRSF000445">
    <property type="entry name" value="4pyrrol_synth_GluRdtase"/>
    <property type="match status" value="1"/>
</dbReference>
<dbReference type="SUPFAM" id="SSF69742">
    <property type="entry name" value="Glutamyl tRNA-reductase catalytic, N-terminal domain"/>
    <property type="match status" value="1"/>
</dbReference>
<dbReference type="SUPFAM" id="SSF69075">
    <property type="entry name" value="Glutamyl tRNA-reductase dimerization domain"/>
    <property type="match status" value="1"/>
</dbReference>
<dbReference type="SUPFAM" id="SSF51735">
    <property type="entry name" value="NAD(P)-binding Rossmann-fold domains"/>
    <property type="match status" value="1"/>
</dbReference>
<dbReference type="PROSITE" id="PS00747">
    <property type="entry name" value="GLUTR"/>
    <property type="match status" value="1"/>
</dbReference>
<organism>
    <name type="scientific">Herpetosiphon aurantiacus (strain ATCC 23779 / DSM 785 / 114-95)</name>
    <dbReference type="NCBI Taxonomy" id="316274"/>
    <lineage>
        <taxon>Bacteria</taxon>
        <taxon>Bacillati</taxon>
        <taxon>Chloroflexota</taxon>
        <taxon>Chloroflexia</taxon>
        <taxon>Herpetosiphonales</taxon>
        <taxon>Herpetosiphonaceae</taxon>
        <taxon>Herpetosiphon</taxon>
    </lineage>
</organism>
<evidence type="ECO:0000255" key="1">
    <source>
        <dbReference type="HAMAP-Rule" id="MF_00087"/>
    </source>
</evidence>
<feature type="chain" id="PRO_1000093146" description="Glutamyl-tRNA reductase">
    <location>
        <begin position="1"/>
        <end position="414"/>
    </location>
</feature>
<feature type="active site" description="Nucleophile" evidence="1">
    <location>
        <position position="48"/>
    </location>
</feature>
<feature type="binding site" evidence="1">
    <location>
        <begin position="47"/>
        <end position="50"/>
    </location>
    <ligand>
        <name>substrate</name>
    </ligand>
</feature>
<feature type="binding site" evidence="1">
    <location>
        <position position="106"/>
    </location>
    <ligand>
        <name>substrate</name>
    </ligand>
</feature>
<feature type="binding site" evidence="1">
    <location>
        <begin position="111"/>
        <end position="113"/>
    </location>
    <ligand>
        <name>substrate</name>
    </ligand>
</feature>
<feature type="binding site" evidence="1">
    <location>
        <position position="117"/>
    </location>
    <ligand>
        <name>substrate</name>
    </ligand>
</feature>
<feature type="binding site" evidence="1">
    <location>
        <begin position="185"/>
        <end position="190"/>
    </location>
    <ligand>
        <name>NADP(+)</name>
        <dbReference type="ChEBI" id="CHEBI:58349"/>
    </ligand>
</feature>
<feature type="site" description="Important for activity" evidence="1">
    <location>
        <position position="96"/>
    </location>
</feature>
<accession>A9B543</accession>
<name>HEM1_HERA2</name>
<reference key="1">
    <citation type="journal article" date="2011" name="Stand. Genomic Sci.">
        <title>Complete genome sequence of the filamentous gliding predatory bacterium Herpetosiphon aurantiacus type strain (114-95(T)).</title>
        <authorList>
            <person name="Kiss H."/>
            <person name="Nett M."/>
            <person name="Domin N."/>
            <person name="Martin K."/>
            <person name="Maresca J.A."/>
            <person name="Copeland A."/>
            <person name="Lapidus A."/>
            <person name="Lucas S."/>
            <person name="Berry K.W."/>
            <person name="Glavina Del Rio T."/>
            <person name="Dalin E."/>
            <person name="Tice H."/>
            <person name="Pitluck S."/>
            <person name="Richardson P."/>
            <person name="Bruce D."/>
            <person name="Goodwin L."/>
            <person name="Han C."/>
            <person name="Detter J.C."/>
            <person name="Schmutz J."/>
            <person name="Brettin T."/>
            <person name="Land M."/>
            <person name="Hauser L."/>
            <person name="Kyrpides N.C."/>
            <person name="Ivanova N."/>
            <person name="Goeker M."/>
            <person name="Woyke T."/>
            <person name="Klenk H.P."/>
            <person name="Bryant D.A."/>
        </authorList>
    </citation>
    <scope>NUCLEOTIDE SEQUENCE [LARGE SCALE GENOMIC DNA]</scope>
    <source>
        <strain>ATCC 23779 / DSM 785 / 114-95</strain>
    </source>
</reference>
<gene>
    <name evidence="1" type="primary">hemA</name>
    <name type="ordered locus">Haur_3544</name>
</gene>
<protein>
    <recommendedName>
        <fullName evidence="1">Glutamyl-tRNA reductase</fullName>
        <shortName evidence="1">GluTR</shortName>
        <ecNumber evidence="1">1.2.1.70</ecNumber>
    </recommendedName>
</protein>
<proteinExistence type="inferred from homology"/>
<comment type="function">
    <text evidence="1">Catalyzes the NADPH-dependent reduction of glutamyl-tRNA(Glu) to glutamate 1-semialdehyde (GSA).</text>
</comment>
<comment type="catalytic activity">
    <reaction evidence="1">
        <text>(S)-4-amino-5-oxopentanoate + tRNA(Glu) + NADP(+) = L-glutamyl-tRNA(Glu) + NADPH + H(+)</text>
        <dbReference type="Rhea" id="RHEA:12344"/>
        <dbReference type="Rhea" id="RHEA-COMP:9663"/>
        <dbReference type="Rhea" id="RHEA-COMP:9680"/>
        <dbReference type="ChEBI" id="CHEBI:15378"/>
        <dbReference type="ChEBI" id="CHEBI:57501"/>
        <dbReference type="ChEBI" id="CHEBI:57783"/>
        <dbReference type="ChEBI" id="CHEBI:58349"/>
        <dbReference type="ChEBI" id="CHEBI:78442"/>
        <dbReference type="ChEBI" id="CHEBI:78520"/>
        <dbReference type="EC" id="1.2.1.70"/>
    </reaction>
</comment>
<comment type="pathway">
    <text evidence="1">Porphyrin-containing compound metabolism; protoporphyrin-IX biosynthesis; 5-aminolevulinate from L-glutamyl-tRNA(Glu): step 1/2.</text>
</comment>
<comment type="subunit">
    <text evidence="1">Homodimer.</text>
</comment>
<comment type="domain">
    <text evidence="1">Possesses an unusual extended V-shaped dimeric structure with each monomer consisting of three distinct domains arranged along a curved 'spinal' alpha-helix. The N-terminal catalytic domain specifically recognizes the glutamate moiety of the substrate. The second domain is the NADPH-binding domain, and the third C-terminal domain is responsible for dimerization.</text>
</comment>
<comment type="miscellaneous">
    <text evidence="1">During catalysis, the active site Cys acts as a nucleophile attacking the alpha-carbonyl group of tRNA-bound glutamate with the formation of a thioester intermediate between enzyme and glutamate, and the concomitant release of tRNA(Glu). The thioester intermediate is finally reduced by direct hydride transfer from NADPH, to form the product GSA.</text>
</comment>
<comment type="similarity">
    <text evidence="1">Belongs to the glutamyl-tRNA reductase family.</text>
</comment>